<accession>Q4KLY8</accession>
<keyword id="KW-0053">Apoptosis</keyword>
<keyword id="KW-0963">Cytoplasm</keyword>
<keyword id="KW-0539">Nucleus</keyword>
<keyword id="KW-0597">Phosphoprotein</keyword>
<keyword id="KW-1185">Reference proteome</keyword>
<keyword id="KW-0677">Repeat</keyword>
<protein>
    <recommendedName>
        <fullName>O(6)-methylguanine-induced apoptosis 2</fullName>
        <shortName>MAPO2</shortName>
    </recommendedName>
    <alternativeName>
        <fullName>Sperm-tail PG-rich repeat-containing protein 1</fullName>
    </alternativeName>
</protein>
<proteinExistence type="evidence at transcript level"/>
<sequence>MSQKFANTGSFIEREDLGKPNKGVDRVQKGFTAAYPTQSSIPYRHRRSVIPESEKRGFNSQARRFYSKKDDIPGPGFYNVIHQSLVFNSVSLSKRGTCTFPSTCARLGPIISKYPAANAYTIRSELASKKDFSNSCSSMFQLPTFIKVVKSETPAPNHYNASISICKQRNNVCARAGFLSKTPRGFVPSSEPGGPAPGHYDVNESLVRESPKVLVSCFKSKTGRGLKPTSTGPGPGYYNPNDQTKILRKSHLPKTTLLNFSAQPLPLPEKPPLPGPGQYEIVNYQGPPKHFISTASFVSNTSRWPVKSSKPTLPGPASYKPEIPGKQSFLYNEDNKWIPAV</sequence>
<organism>
    <name type="scientific">Rattus norvegicus</name>
    <name type="common">Rat</name>
    <dbReference type="NCBI Taxonomy" id="10116"/>
    <lineage>
        <taxon>Eukaryota</taxon>
        <taxon>Metazoa</taxon>
        <taxon>Chordata</taxon>
        <taxon>Craniata</taxon>
        <taxon>Vertebrata</taxon>
        <taxon>Euteleostomi</taxon>
        <taxon>Mammalia</taxon>
        <taxon>Eutheria</taxon>
        <taxon>Euarchontoglires</taxon>
        <taxon>Glires</taxon>
        <taxon>Rodentia</taxon>
        <taxon>Myomorpha</taxon>
        <taxon>Muroidea</taxon>
        <taxon>Muridae</taxon>
        <taxon>Murinae</taxon>
        <taxon>Rattus</taxon>
    </lineage>
</organism>
<reference key="1">
    <citation type="journal article" date="2004" name="Genome Res.">
        <title>The status, quality, and expansion of the NIH full-length cDNA project: the Mammalian Gene Collection (MGC).</title>
        <authorList>
            <consortium name="The MGC Project Team"/>
        </authorList>
    </citation>
    <scope>NUCLEOTIDE SEQUENCE [LARGE SCALE MRNA]</scope>
    <source>
        <tissue>Testis</tissue>
    </source>
</reference>
<feature type="chain" id="PRO_0000305172" description="O(6)-methylguanine-induced apoptosis 2">
    <location>
        <begin position="1"/>
        <end position="341"/>
    </location>
</feature>
<feature type="repeat" description="STPGR 1">
    <location>
        <begin position="73"/>
        <end position="80"/>
    </location>
</feature>
<feature type="repeat" description="STPGR 2">
    <location>
        <begin position="115"/>
        <end position="123"/>
    </location>
</feature>
<feature type="repeat" description="STPGR 3">
    <location>
        <begin position="154"/>
        <end position="160"/>
    </location>
</feature>
<feature type="repeat" description="STPGR 4">
    <location>
        <begin position="194"/>
        <end position="213"/>
    </location>
</feature>
<feature type="repeat" description="STPGR 5">
    <location>
        <begin position="232"/>
        <end position="254"/>
    </location>
</feature>
<feature type="repeat" description="STPGR 6">
    <location>
        <begin position="273"/>
        <end position="284"/>
    </location>
</feature>
<feature type="repeat" description="STPGR 7">
    <location>
        <begin position="313"/>
        <end position="323"/>
    </location>
</feature>
<feature type="region of interest" description="Disordered" evidence="3">
    <location>
        <begin position="1"/>
        <end position="23"/>
    </location>
</feature>
<feature type="compositionally biased region" description="Polar residues" evidence="3">
    <location>
        <begin position="1"/>
        <end position="10"/>
    </location>
</feature>
<feature type="compositionally biased region" description="Basic and acidic residues" evidence="3">
    <location>
        <begin position="12"/>
        <end position="23"/>
    </location>
</feature>
<feature type="modified residue" description="Phosphotyrosine" evidence="2">
    <location>
        <position position="78"/>
    </location>
</feature>
<comment type="function">
    <text evidence="1">May positively contribute to the induction of apoptosis triggered by O(6)-methylguanine.</text>
</comment>
<comment type="subcellular location">
    <subcellularLocation>
        <location evidence="1">Cytoplasm</location>
    </subcellularLocation>
    <subcellularLocation>
        <location evidence="1">Nucleus</location>
    </subcellularLocation>
</comment>
<comment type="similarity">
    <text evidence="4">Belongs to the STPG1 family.</text>
</comment>
<dbReference type="EMBL" id="BC098937">
    <property type="protein sequence ID" value="AAH98937.1"/>
    <property type="molecule type" value="mRNA"/>
</dbReference>
<dbReference type="RefSeq" id="NP_001020943.1">
    <property type="nucleotide sequence ID" value="NM_001025772.1"/>
</dbReference>
<dbReference type="RefSeq" id="XP_008762501.2">
    <property type="nucleotide sequence ID" value="XM_008764279.2"/>
</dbReference>
<dbReference type="RefSeq" id="XP_017449074.1">
    <property type="nucleotide sequence ID" value="XM_017593585.1"/>
</dbReference>
<dbReference type="RefSeq" id="XP_017449075.1">
    <property type="nucleotide sequence ID" value="XM_017593586.3"/>
</dbReference>
<dbReference type="RefSeq" id="XP_017449076.1">
    <property type="nucleotide sequence ID" value="XM_017593587.3"/>
</dbReference>
<dbReference type="RefSeq" id="XP_017449077.1">
    <property type="nucleotide sequence ID" value="XM_017593588.1"/>
</dbReference>
<dbReference type="FunCoup" id="Q4KLY8">
    <property type="interactions" value="75"/>
</dbReference>
<dbReference type="STRING" id="10116.ENSRNOP00000051024"/>
<dbReference type="PhosphoSitePlus" id="Q4KLY8"/>
<dbReference type="PaxDb" id="10116-ENSRNOP00000051024"/>
<dbReference type="Ensembl" id="ENSRNOT00000041600.4">
    <property type="protein sequence ID" value="ENSRNOP00000051024.3"/>
    <property type="gene ID" value="ENSRNOG00000031448.5"/>
</dbReference>
<dbReference type="GeneID" id="500566"/>
<dbReference type="KEGG" id="rno:500566"/>
<dbReference type="UCSC" id="RGD:1560169">
    <property type="organism name" value="rat"/>
</dbReference>
<dbReference type="AGR" id="RGD:1560169"/>
<dbReference type="CTD" id="90529"/>
<dbReference type="RGD" id="1560169">
    <property type="gene designation" value="Stpg1"/>
</dbReference>
<dbReference type="eggNOG" id="ENOG502R2KG">
    <property type="taxonomic scope" value="Eukaryota"/>
</dbReference>
<dbReference type="GeneTree" id="ENSGT00390000011598"/>
<dbReference type="InParanoid" id="Q4KLY8"/>
<dbReference type="OMA" id="GQYENPI"/>
<dbReference type="OrthoDB" id="40683at9989"/>
<dbReference type="PhylomeDB" id="Q4KLY8"/>
<dbReference type="TreeFam" id="TF328937"/>
<dbReference type="PRO" id="PR:Q4KLY8"/>
<dbReference type="Proteomes" id="UP000002494">
    <property type="component" value="Chromosome 5"/>
</dbReference>
<dbReference type="Bgee" id="ENSRNOG00000031448">
    <property type="expression patterns" value="Expressed in testis and 4 other cell types or tissues"/>
</dbReference>
<dbReference type="GO" id="GO:0005739">
    <property type="term" value="C:mitochondrion"/>
    <property type="evidence" value="ECO:0007669"/>
    <property type="project" value="GOC"/>
</dbReference>
<dbReference type="GO" id="GO:0005634">
    <property type="term" value="C:nucleus"/>
    <property type="evidence" value="ECO:0007669"/>
    <property type="project" value="UniProtKB-SubCell"/>
</dbReference>
<dbReference type="GO" id="GO:0043065">
    <property type="term" value="P:positive regulation of apoptotic process"/>
    <property type="evidence" value="ECO:0000266"/>
    <property type="project" value="RGD"/>
</dbReference>
<dbReference type="GO" id="GO:1902110">
    <property type="term" value="P:positive regulation of mitochondrial membrane permeability involved in apoptotic process"/>
    <property type="evidence" value="ECO:0000266"/>
    <property type="project" value="RGD"/>
</dbReference>
<dbReference type="InterPro" id="IPR010736">
    <property type="entry name" value="SHIPPO-rpt"/>
</dbReference>
<dbReference type="PANTHER" id="PTHR35678">
    <property type="entry name" value="PROTEIN STPG4"/>
    <property type="match status" value="1"/>
</dbReference>
<dbReference type="PANTHER" id="PTHR35678:SF1">
    <property type="entry name" value="PROTEIN STPG4"/>
    <property type="match status" value="1"/>
</dbReference>
<dbReference type="Pfam" id="PF07004">
    <property type="entry name" value="SHIPPO-rpt"/>
    <property type="match status" value="3"/>
</dbReference>
<name>STPG1_RAT</name>
<gene>
    <name type="primary">Stpg1</name>
</gene>
<evidence type="ECO:0000250" key="1"/>
<evidence type="ECO:0000250" key="2">
    <source>
        <dbReference type="UniProtKB" id="Q5TH74"/>
    </source>
</evidence>
<evidence type="ECO:0000256" key="3">
    <source>
        <dbReference type="SAM" id="MobiDB-lite"/>
    </source>
</evidence>
<evidence type="ECO:0000305" key="4"/>